<accession>B5ZB96</accession>
<protein>
    <recommendedName>
        <fullName evidence="1">Histidine--tRNA ligase</fullName>
        <ecNumber evidence="1">6.1.1.21</ecNumber>
    </recommendedName>
    <alternativeName>
        <fullName evidence="1">Histidyl-tRNA synthetase</fullName>
        <shortName evidence="1">HisRS</shortName>
    </alternativeName>
</protein>
<organism>
    <name type="scientific">Ureaplasma urealyticum serovar 10 (strain ATCC 33699 / Western)</name>
    <dbReference type="NCBI Taxonomy" id="565575"/>
    <lineage>
        <taxon>Bacteria</taxon>
        <taxon>Bacillati</taxon>
        <taxon>Mycoplasmatota</taxon>
        <taxon>Mycoplasmoidales</taxon>
        <taxon>Mycoplasmoidaceae</taxon>
        <taxon>Ureaplasma</taxon>
    </lineage>
</organism>
<sequence length="421" mass="48846">MSNYTKPRGTVDLYNEAMNEFKSLENFLLTTTKKYGFQQIKTPIFEFAELFMKSAGESSDLVSKEMYLFKDKSDRWLALRPEGTAGVIRAVVENKLLLNNPLPLKLMYFEPCFRYERPQAGRQRQFHQFGVEVLGTKNIYYDFELIALANNILKKLAISDYVLEINYISTAHNRSLWVKSLQEYFNLYRDELTPLSQERITTNPLRILDDKLESQKLVVQQAPKITNFLSNEEKEEFALIKKMLDEHDIKYRVNEGLVRGLDYYSGLVFEFISTSPRLLGQSTIIGGGRYGQLIKQTGGPDYEGIGFGIGIERLLIALLDSNKQILNNFEDKYLIAYFDKELENEAIKLTQSLRINNQLNVDIILDTIKADKIFRLAQRLNAKKLIILAKKEWLNKQVILKDLLSFEQKTLNLDEIKKIKE</sequence>
<name>SYH_UREU1</name>
<feature type="chain" id="PRO_1000095609" description="Histidine--tRNA ligase">
    <location>
        <begin position="1"/>
        <end position="421"/>
    </location>
</feature>
<evidence type="ECO:0000255" key="1">
    <source>
        <dbReference type="HAMAP-Rule" id="MF_00127"/>
    </source>
</evidence>
<gene>
    <name evidence="1" type="primary">hisS</name>
    <name type="ordered locus">UUR10_0283</name>
</gene>
<reference key="1">
    <citation type="submission" date="2008-10" db="EMBL/GenBank/DDBJ databases">
        <title>Genome sequence of Ureaplasma urealyticum serovar 10 ATCC-33699.</title>
        <authorList>
            <person name="Shrivastava S."/>
            <person name="Methe B.A."/>
            <person name="Glass J."/>
            <person name="White K."/>
            <person name="Duffy L.B."/>
        </authorList>
    </citation>
    <scope>NUCLEOTIDE SEQUENCE [LARGE SCALE GENOMIC DNA]</scope>
    <source>
        <strain>ATCC 33699 / Western</strain>
    </source>
</reference>
<dbReference type="EC" id="6.1.1.21" evidence="1"/>
<dbReference type="EMBL" id="CP001184">
    <property type="protein sequence ID" value="ACI60309.1"/>
    <property type="molecule type" value="Genomic_DNA"/>
</dbReference>
<dbReference type="RefSeq" id="WP_004025545.1">
    <property type="nucleotide sequence ID" value="NC_011374.1"/>
</dbReference>
<dbReference type="SMR" id="B5ZB96"/>
<dbReference type="STRING" id="565575.UUR10_0283"/>
<dbReference type="GeneID" id="93848762"/>
<dbReference type="KEGG" id="uue:UUR10_0283"/>
<dbReference type="eggNOG" id="COG0124">
    <property type="taxonomic scope" value="Bacteria"/>
</dbReference>
<dbReference type="HOGENOM" id="CLU_025113_1_1_14"/>
<dbReference type="OrthoDB" id="9800814at2"/>
<dbReference type="Proteomes" id="UP000002018">
    <property type="component" value="Chromosome"/>
</dbReference>
<dbReference type="GO" id="GO:0005737">
    <property type="term" value="C:cytoplasm"/>
    <property type="evidence" value="ECO:0007669"/>
    <property type="project" value="UniProtKB-SubCell"/>
</dbReference>
<dbReference type="GO" id="GO:0005524">
    <property type="term" value="F:ATP binding"/>
    <property type="evidence" value="ECO:0007669"/>
    <property type="project" value="UniProtKB-UniRule"/>
</dbReference>
<dbReference type="GO" id="GO:0004821">
    <property type="term" value="F:histidine-tRNA ligase activity"/>
    <property type="evidence" value="ECO:0007669"/>
    <property type="project" value="UniProtKB-UniRule"/>
</dbReference>
<dbReference type="GO" id="GO:0006427">
    <property type="term" value="P:histidyl-tRNA aminoacylation"/>
    <property type="evidence" value="ECO:0007669"/>
    <property type="project" value="UniProtKB-UniRule"/>
</dbReference>
<dbReference type="CDD" id="cd00773">
    <property type="entry name" value="HisRS-like_core"/>
    <property type="match status" value="1"/>
</dbReference>
<dbReference type="Gene3D" id="3.40.50.800">
    <property type="entry name" value="Anticodon-binding domain"/>
    <property type="match status" value="1"/>
</dbReference>
<dbReference type="Gene3D" id="3.30.930.10">
    <property type="entry name" value="Bira Bifunctional Protein, Domain 2"/>
    <property type="match status" value="1"/>
</dbReference>
<dbReference type="HAMAP" id="MF_00127">
    <property type="entry name" value="His_tRNA_synth"/>
    <property type="match status" value="1"/>
</dbReference>
<dbReference type="InterPro" id="IPR006195">
    <property type="entry name" value="aa-tRNA-synth_II"/>
</dbReference>
<dbReference type="InterPro" id="IPR045864">
    <property type="entry name" value="aa-tRNA-synth_II/BPL/LPL"/>
</dbReference>
<dbReference type="InterPro" id="IPR036621">
    <property type="entry name" value="Anticodon-bd_dom_sf"/>
</dbReference>
<dbReference type="InterPro" id="IPR015807">
    <property type="entry name" value="His-tRNA-ligase"/>
</dbReference>
<dbReference type="InterPro" id="IPR041715">
    <property type="entry name" value="HisRS-like_core"/>
</dbReference>
<dbReference type="InterPro" id="IPR004516">
    <property type="entry name" value="HisRS/HisZ"/>
</dbReference>
<dbReference type="NCBIfam" id="TIGR00442">
    <property type="entry name" value="hisS"/>
    <property type="match status" value="1"/>
</dbReference>
<dbReference type="PANTHER" id="PTHR43707:SF1">
    <property type="entry name" value="HISTIDINE--TRNA LIGASE, MITOCHONDRIAL-RELATED"/>
    <property type="match status" value="1"/>
</dbReference>
<dbReference type="PANTHER" id="PTHR43707">
    <property type="entry name" value="HISTIDYL-TRNA SYNTHETASE"/>
    <property type="match status" value="1"/>
</dbReference>
<dbReference type="Pfam" id="PF13393">
    <property type="entry name" value="tRNA-synt_His"/>
    <property type="match status" value="1"/>
</dbReference>
<dbReference type="PIRSF" id="PIRSF001549">
    <property type="entry name" value="His-tRNA_synth"/>
    <property type="match status" value="1"/>
</dbReference>
<dbReference type="SUPFAM" id="SSF52954">
    <property type="entry name" value="Class II aaRS ABD-related"/>
    <property type="match status" value="1"/>
</dbReference>
<dbReference type="SUPFAM" id="SSF55681">
    <property type="entry name" value="Class II aaRS and biotin synthetases"/>
    <property type="match status" value="1"/>
</dbReference>
<dbReference type="PROSITE" id="PS50862">
    <property type="entry name" value="AA_TRNA_LIGASE_II"/>
    <property type="match status" value="1"/>
</dbReference>
<keyword id="KW-0030">Aminoacyl-tRNA synthetase</keyword>
<keyword id="KW-0067">ATP-binding</keyword>
<keyword id="KW-0963">Cytoplasm</keyword>
<keyword id="KW-0436">Ligase</keyword>
<keyword id="KW-0547">Nucleotide-binding</keyword>
<keyword id="KW-0648">Protein biosynthesis</keyword>
<proteinExistence type="inferred from homology"/>
<comment type="catalytic activity">
    <reaction evidence="1">
        <text>tRNA(His) + L-histidine + ATP = L-histidyl-tRNA(His) + AMP + diphosphate + H(+)</text>
        <dbReference type="Rhea" id="RHEA:17313"/>
        <dbReference type="Rhea" id="RHEA-COMP:9665"/>
        <dbReference type="Rhea" id="RHEA-COMP:9689"/>
        <dbReference type="ChEBI" id="CHEBI:15378"/>
        <dbReference type="ChEBI" id="CHEBI:30616"/>
        <dbReference type="ChEBI" id="CHEBI:33019"/>
        <dbReference type="ChEBI" id="CHEBI:57595"/>
        <dbReference type="ChEBI" id="CHEBI:78442"/>
        <dbReference type="ChEBI" id="CHEBI:78527"/>
        <dbReference type="ChEBI" id="CHEBI:456215"/>
        <dbReference type="EC" id="6.1.1.21"/>
    </reaction>
</comment>
<comment type="subunit">
    <text evidence="1">Homodimer.</text>
</comment>
<comment type="subcellular location">
    <subcellularLocation>
        <location evidence="1">Cytoplasm</location>
    </subcellularLocation>
</comment>
<comment type="similarity">
    <text evidence="1">Belongs to the class-II aminoacyl-tRNA synthetase family.</text>
</comment>